<reference key="1">
    <citation type="journal article" date="1994" name="Gene">
        <title>Genetic organization and enzymatic activity of a superoxide dismutase from the microaerophilic human pathogen, Helicobacter pylori.</title>
        <authorList>
            <person name="Pesci E.C."/>
            <person name="Pickett C.L."/>
        </authorList>
    </citation>
    <scope>NUCLEOTIDE SEQUENCE [GENOMIC DNA]</scope>
</reference>
<reference key="2">
    <citation type="journal article" date="1993" name="Infect. Immun.">
        <title>Purification of Helicobacter pylori superoxide dismutase and cloning and sequencing of the gene.</title>
        <authorList>
            <person name="Spiegelhalder C."/>
            <person name="Gerstenecker B."/>
            <person name="Kersten A."/>
            <person name="Schiltz E."/>
            <person name="Kist M."/>
        </authorList>
    </citation>
    <scope>NUCLEOTIDE SEQUENCE [GENOMIC DNA]</scope>
    <scope>PARTIAL PROTEIN SEQUENCE</scope>
    <scope>CHARACTERIZATION</scope>
    <source>
        <strain>2012</strain>
    </source>
</reference>
<reference key="3">
    <citation type="journal article" date="1997" name="Nature">
        <title>The complete genome sequence of the gastric pathogen Helicobacter pylori.</title>
        <authorList>
            <person name="Tomb J.-F."/>
            <person name="White O."/>
            <person name="Kerlavage A.R."/>
            <person name="Clayton R.A."/>
            <person name="Sutton G.G."/>
            <person name="Fleischmann R.D."/>
            <person name="Ketchum K.A."/>
            <person name="Klenk H.-P."/>
            <person name="Gill S.R."/>
            <person name="Dougherty B.A."/>
            <person name="Nelson K.E."/>
            <person name="Quackenbush J."/>
            <person name="Zhou L."/>
            <person name="Kirkness E.F."/>
            <person name="Peterson S.N."/>
            <person name="Loftus B.J."/>
            <person name="Richardson D.L."/>
            <person name="Dodson R.J."/>
            <person name="Khalak H.G."/>
            <person name="Glodek A."/>
            <person name="McKenney K."/>
            <person name="FitzGerald L.M."/>
            <person name="Lee N."/>
            <person name="Adams M.D."/>
            <person name="Hickey E.K."/>
            <person name="Berg D.E."/>
            <person name="Gocayne J.D."/>
            <person name="Utterback T.R."/>
            <person name="Peterson J.D."/>
            <person name="Kelley J.M."/>
            <person name="Cotton M.D."/>
            <person name="Weidman J.F."/>
            <person name="Fujii C."/>
            <person name="Bowman C."/>
            <person name="Watthey L."/>
            <person name="Wallin E."/>
            <person name="Hayes W.S."/>
            <person name="Borodovsky M."/>
            <person name="Karp P.D."/>
            <person name="Smith H.O."/>
            <person name="Fraser C.M."/>
            <person name="Venter J.C."/>
        </authorList>
    </citation>
    <scope>NUCLEOTIDE SEQUENCE [LARGE SCALE GENOMIC DNA]</scope>
    <source>
        <strain>ATCC 700392 / 26695</strain>
    </source>
</reference>
<reference key="4">
    <citation type="journal article" date="2000" name="FEMS Microbiol. Lett.">
        <title>Identification and molecular analysis of superoxide dismutase isoforms in Helicobacter pylori.</title>
        <authorList>
            <person name="Bereswill S."/>
            <person name="Neuner O."/>
            <person name="Strobel S."/>
            <person name="Kist M."/>
        </authorList>
    </citation>
    <scope>NUCLEOTIDE SEQUENCE [GENOMIC DNA]</scope>
    <source>
        <strain>151</strain>
    </source>
</reference>
<feature type="chain" id="PRO_0000159985" description="Superoxide dismutase [Fe]">
    <location>
        <begin position="1"/>
        <end position="213"/>
    </location>
</feature>
<feature type="binding site" evidence="1">
    <location>
        <position position="26"/>
    </location>
    <ligand>
        <name>Fe cation</name>
        <dbReference type="ChEBI" id="CHEBI:24875"/>
    </ligand>
</feature>
<feature type="binding site" evidence="1">
    <location>
        <position position="73"/>
    </location>
    <ligand>
        <name>Fe cation</name>
        <dbReference type="ChEBI" id="CHEBI:24875"/>
    </ligand>
</feature>
<feature type="binding site" evidence="1">
    <location>
        <position position="156"/>
    </location>
    <ligand>
        <name>Fe cation</name>
        <dbReference type="ChEBI" id="CHEBI:24875"/>
    </ligand>
</feature>
<feature type="binding site" evidence="1">
    <location>
        <position position="160"/>
    </location>
    <ligand>
        <name>Fe cation</name>
        <dbReference type="ChEBI" id="CHEBI:24875"/>
    </ligand>
</feature>
<feature type="sequence conflict" description="In Ref. 3; AAD07454." evidence="2" ref="3">
    <original>K</original>
    <variation>Q</variation>
    <location>
        <position position="104"/>
    </location>
</feature>
<feature type="sequence conflict" description="In Ref. 2; CAA51195." evidence="2" ref="2">
    <original>S</original>
    <variation>R</variation>
    <location>
        <position position="112"/>
    </location>
</feature>
<feature type="sequence conflict" description="In Ref. 3; AAD07454." evidence="2" ref="3">
    <original>A</original>
    <variation>V</variation>
    <location>
        <position position="124"/>
    </location>
</feature>
<feature type="sequence conflict" description="In Ref. 2; CAA51195." evidence="2" ref="2">
    <original>A</original>
    <variation>P</variation>
    <location>
        <position position="125"/>
    </location>
</feature>
<feature type="sequence conflict" description="In Ref. 3; AAD07454." evidence="2" ref="3">
    <original>G</original>
    <variation>E</variation>
    <location>
        <position position="179"/>
    </location>
</feature>
<feature type="sequence conflict" description="In Ref. 2; CAA51195." evidence="2" ref="2">
    <original>A</original>
    <variation>LE</variation>
    <location>
        <position position="213"/>
    </location>
</feature>
<feature type="turn" evidence="3">
    <location>
        <begin position="15"/>
        <end position="17"/>
    </location>
</feature>
<feature type="helix" evidence="3">
    <location>
        <begin position="20"/>
        <end position="26"/>
    </location>
</feature>
<feature type="turn" evidence="3">
    <location>
        <begin position="27"/>
        <end position="29"/>
    </location>
</feature>
<feature type="helix" evidence="3">
    <location>
        <begin position="30"/>
        <end position="42"/>
    </location>
</feature>
<feature type="turn" evidence="3">
    <location>
        <begin position="46"/>
        <end position="49"/>
    </location>
</feature>
<feature type="helix" evidence="3">
    <location>
        <begin position="52"/>
        <end position="58"/>
    </location>
</feature>
<feature type="helix" evidence="3">
    <location>
        <begin position="61"/>
        <end position="78"/>
    </location>
</feature>
<feature type="helix" evidence="3">
    <location>
        <begin position="89"/>
        <end position="99"/>
    </location>
</feature>
<feature type="helix" evidence="3">
    <location>
        <begin position="102"/>
        <end position="115"/>
    </location>
</feature>
<feature type="strand" evidence="3">
    <location>
        <begin position="118"/>
        <end position="126"/>
    </location>
</feature>
<feature type="turn" evidence="3">
    <location>
        <begin position="128"/>
        <end position="130"/>
    </location>
</feature>
<feature type="strand" evidence="3">
    <location>
        <begin position="133"/>
        <end position="139"/>
    </location>
</feature>
<feature type="helix" evidence="3">
    <location>
        <begin position="144"/>
        <end position="147"/>
    </location>
</feature>
<feature type="strand" evidence="3">
    <location>
        <begin position="150"/>
        <end position="156"/>
    </location>
</feature>
<feature type="helix" evidence="3">
    <location>
        <begin position="159"/>
        <end position="161"/>
    </location>
</feature>
<feature type="helix" evidence="3">
    <location>
        <begin position="163"/>
        <end position="166"/>
    </location>
</feature>
<feature type="helix" evidence="3">
    <location>
        <begin position="170"/>
        <end position="179"/>
    </location>
</feature>
<feature type="helix" evidence="3">
    <location>
        <begin position="183"/>
        <end position="196"/>
    </location>
</feature>
<feature type="helix" evidence="3">
    <location>
        <begin position="199"/>
        <end position="208"/>
    </location>
</feature>
<name>SODF_HELPY</name>
<dbReference type="EC" id="1.15.1.1"/>
<dbReference type="EMBL" id="L24801">
    <property type="protein sequence ID" value="AAC36885.1"/>
    <property type="molecule type" value="Unassigned_DNA"/>
</dbReference>
<dbReference type="EMBL" id="X72618">
    <property type="protein sequence ID" value="CAA51195.1"/>
    <property type="molecule type" value="Genomic_DNA"/>
</dbReference>
<dbReference type="EMBL" id="AE000511">
    <property type="protein sequence ID" value="AAD07454.1"/>
    <property type="molecule type" value="Genomic_DNA"/>
</dbReference>
<dbReference type="EMBL" id="AJ132687">
    <property type="protein sequence ID" value="CAA10728.1"/>
    <property type="molecule type" value="Genomic_DNA"/>
</dbReference>
<dbReference type="PIR" id="E64568">
    <property type="entry name" value="E64568"/>
</dbReference>
<dbReference type="RefSeq" id="NP_207187.1">
    <property type="nucleotide sequence ID" value="NC_000915.1"/>
</dbReference>
<dbReference type="PDB" id="3CEI">
    <property type="method" value="X-ray"/>
    <property type="resolution" value="2.40 A"/>
    <property type="chains" value="A/B=1-212"/>
</dbReference>
<dbReference type="PDBsum" id="3CEI"/>
<dbReference type="SMR" id="P43312"/>
<dbReference type="DIP" id="DIP-3411N"/>
<dbReference type="FunCoup" id="P43312">
    <property type="interactions" value="171"/>
</dbReference>
<dbReference type="IntAct" id="P43312">
    <property type="interactions" value="4"/>
</dbReference>
<dbReference type="MINT" id="P43312"/>
<dbReference type="STRING" id="85962.HP_0389"/>
<dbReference type="PaxDb" id="85962-C694_01975"/>
<dbReference type="EnsemblBacteria" id="AAD07454">
    <property type="protein sequence ID" value="AAD07454"/>
    <property type="gene ID" value="HP_0389"/>
</dbReference>
<dbReference type="KEGG" id="hpy:HP_0389"/>
<dbReference type="PATRIC" id="fig|85962.8.peg.402"/>
<dbReference type="eggNOG" id="COG0605">
    <property type="taxonomic scope" value="Bacteria"/>
</dbReference>
<dbReference type="InParanoid" id="P43312"/>
<dbReference type="OrthoDB" id="9803125at2"/>
<dbReference type="PhylomeDB" id="P43312"/>
<dbReference type="EvolutionaryTrace" id="P43312"/>
<dbReference type="Proteomes" id="UP000000429">
    <property type="component" value="Chromosome"/>
</dbReference>
<dbReference type="GO" id="GO:0046872">
    <property type="term" value="F:metal ion binding"/>
    <property type="evidence" value="ECO:0007669"/>
    <property type="project" value="UniProtKB-KW"/>
</dbReference>
<dbReference type="GO" id="GO:0004784">
    <property type="term" value="F:superoxide dismutase activity"/>
    <property type="evidence" value="ECO:0007669"/>
    <property type="project" value="UniProtKB-EC"/>
</dbReference>
<dbReference type="GO" id="GO:0071281">
    <property type="term" value="P:cellular response to iron ion"/>
    <property type="evidence" value="ECO:0000314"/>
    <property type="project" value="CollecTF"/>
</dbReference>
<dbReference type="FunFam" id="1.10.287.990:FF:000002">
    <property type="entry name" value="Superoxide dismutase"/>
    <property type="match status" value="1"/>
</dbReference>
<dbReference type="FunFam" id="3.55.40.20:FF:000008">
    <property type="entry name" value="Superoxide dismutase"/>
    <property type="match status" value="1"/>
</dbReference>
<dbReference type="Gene3D" id="1.10.287.990">
    <property type="entry name" value="Fe,Mn superoxide dismutase (SOD) domain"/>
    <property type="match status" value="1"/>
</dbReference>
<dbReference type="Gene3D" id="3.55.40.20">
    <property type="entry name" value="Iron/manganese superoxide dismutase, C-terminal domain"/>
    <property type="match status" value="1"/>
</dbReference>
<dbReference type="InterPro" id="IPR001189">
    <property type="entry name" value="Mn/Fe_SOD"/>
</dbReference>
<dbReference type="InterPro" id="IPR019833">
    <property type="entry name" value="Mn/Fe_SOD_BS"/>
</dbReference>
<dbReference type="InterPro" id="IPR019832">
    <property type="entry name" value="Mn/Fe_SOD_C"/>
</dbReference>
<dbReference type="InterPro" id="IPR019831">
    <property type="entry name" value="Mn/Fe_SOD_N"/>
</dbReference>
<dbReference type="InterPro" id="IPR036324">
    <property type="entry name" value="Mn/Fe_SOD_N_sf"/>
</dbReference>
<dbReference type="InterPro" id="IPR036314">
    <property type="entry name" value="SOD_C_sf"/>
</dbReference>
<dbReference type="PANTHER" id="PTHR42769">
    <property type="entry name" value="SUPEROXIDE DISMUTASE"/>
    <property type="match status" value="1"/>
</dbReference>
<dbReference type="PANTHER" id="PTHR42769:SF3">
    <property type="entry name" value="SUPEROXIDE DISMUTASE [FE] 2, CHLOROPLASTIC"/>
    <property type="match status" value="1"/>
</dbReference>
<dbReference type="Pfam" id="PF02777">
    <property type="entry name" value="Sod_Fe_C"/>
    <property type="match status" value="1"/>
</dbReference>
<dbReference type="Pfam" id="PF00081">
    <property type="entry name" value="Sod_Fe_N"/>
    <property type="match status" value="1"/>
</dbReference>
<dbReference type="PIRSF" id="PIRSF000349">
    <property type="entry name" value="SODismutase"/>
    <property type="match status" value="1"/>
</dbReference>
<dbReference type="PRINTS" id="PR01703">
    <property type="entry name" value="MNSODISMTASE"/>
</dbReference>
<dbReference type="SUPFAM" id="SSF54719">
    <property type="entry name" value="Fe,Mn superoxide dismutase (SOD), C-terminal domain"/>
    <property type="match status" value="1"/>
</dbReference>
<dbReference type="SUPFAM" id="SSF46609">
    <property type="entry name" value="Fe,Mn superoxide dismutase (SOD), N-terminal domain"/>
    <property type="match status" value="1"/>
</dbReference>
<dbReference type="PROSITE" id="PS00088">
    <property type="entry name" value="SOD_MN"/>
    <property type="match status" value="1"/>
</dbReference>
<sequence>MFTLRELPFAKDSMGDFLSPVAFDFHHGKHHQTYVNNLNNLIKGTDFEKSSLFDILTKSSGGVFNNAAQIYNHDFYWDCLSPKATALSDELKGALEKDFGSLEKFKEDFIKSATTLFGSGWNWAAYNLDTQKIEIIQTSNAQTPVTDKKVPLLVVDVWEHAYYIDHKNARPVYLEKFYGHINWHFVSQCYEWAKKEGLGSVDYYINELVHKKA</sequence>
<protein>
    <recommendedName>
        <fullName>Superoxide dismutase [Fe]</fullName>
        <ecNumber>1.15.1.1</ecNumber>
    </recommendedName>
</protein>
<evidence type="ECO:0000250" key="1"/>
<evidence type="ECO:0000305" key="2"/>
<evidence type="ECO:0007829" key="3">
    <source>
        <dbReference type="PDB" id="3CEI"/>
    </source>
</evidence>
<organism>
    <name type="scientific">Helicobacter pylori (strain ATCC 700392 / 26695)</name>
    <name type="common">Campylobacter pylori</name>
    <dbReference type="NCBI Taxonomy" id="85962"/>
    <lineage>
        <taxon>Bacteria</taxon>
        <taxon>Pseudomonadati</taxon>
        <taxon>Campylobacterota</taxon>
        <taxon>Epsilonproteobacteria</taxon>
        <taxon>Campylobacterales</taxon>
        <taxon>Helicobacteraceae</taxon>
        <taxon>Helicobacter</taxon>
    </lineage>
</organism>
<comment type="function">
    <text>Destroys superoxide anion radicals which are normally produced within the cells and which are toxic to biological systems.</text>
</comment>
<comment type="catalytic activity">
    <reaction>
        <text>2 superoxide + 2 H(+) = H2O2 + O2</text>
        <dbReference type="Rhea" id="RHEA:20696"/>
        <dbReference type="ChEBI" id="CHEBI:15378"/>
        <dbReference type="ChEBI" id="CHEBI:15379"/>
        <dbReference type="ChEBI" id="CHEBI:16240"/>
        <dbReference type="ChEBI" id="CHEBI:18421"/>
        <dbReference type="EC" id="1.15.1.1"/>
    </reaction>
</comment>
<comment type="cofactor">
    <cofactor evidence="1">
        <name>Fe cation</name>
        <dbReference type="ChEBI" id="CHEBI:24875"/>
    </cofactor>
    <text evidence="1">Binds 1 Fe cation per subunit.</text>
</comment>
<comment type="subunit">
    <text>Homodimer.</text>
</comment>
<comment type="similarity">
    <text evidence="2">Belongs to the iron/manganese superoxide dismutase family.</text>
</comment>
<accession>P43312</accession>
<gene>
    <name type="primary">sodB</name>
    <name type="ordered locus">HP_0389</name>
</gene>
<keyword id="KW-0002">3D-structure</keyword>
<keyword id="KW-0903">Direct protein sequencing</keyword>
<keyword id="KW-0408">Iron</keyword>
<keyword id="KW-0479">Metal-binding</keyword>
<keyword id="KW-0560">Oxidoreductase</keyword>
<keyword id="KW-1185">Reference proteome</keyword>
<proteinExistence type="evidence at protein level"/>